<geneLocation type="chloroplast"/>
<gene>
    <name type="primary">rps4</name>
</gene>
<accession>P59147</accession>
<proteinExistence type="inferred from homology"/>
<reference key="1">
    <citation type="journal article" date="2002" name="Cryptogam. Bryol.">
        <title>The systematic position of the Hypoptergiaceae (Bryopsida) inferred from rps4 gene sequences.</title>
        <authorList>
            <person name="Bloecher R."/>
            <person name="Capesius I."/>
        </authorList>
    </citation>
    <scope>NUCLEOTIDE SEQUENCE [GENOMIC DNA]</scope>
    <source>
        <tissue>Gametophyte</tissue>
    </source>
</reference>
<comment type="function">
    <text evidence="1">One of the primary rRNA binding proteins, it binds directly to 16S rRNA where it nucleates assembly of the body of the 30S subunit.</text>
</comment>
<comment type="function">
    <text evidence="1">With S5 and S12 plays an important role in translational accuracy.</text>
</comment>
<comment type="subunit">
    <text evidence="1">Part of the 30S ribosomal subunit. Contacts protein S5. The interaction surface between S4 and S5 is involved in control of translational fidelity (By similarity).</text>
</comment>
<comment type="subcellular location">
    <subcellularLocation>
        <location>Plastid</location>
        <location>Chloroplast</location>
    </subcellularLocation>
</comment>
<comment type="similarity">
    <text evidence="2">Belongs to the universal ribosomal protein uS4 family.</text>
</comment>
<evidence type="ECO:0000250" key="1"/>
<evidence type="ECO:0000305" key="2"/>
<feature type="chain" id="PRO_0000132620" description="Small ribosomal subunit protein uS4c">
    <location>
        <begin position="1"/>
        <end position="203"/>
    </location>
</feature>
<feature type="domain" description="S4 RNA-binding">
    <location>
        <begin position="91"/>
        <end position="159"/>
    </location>
</feature>
<name>RR4_LOPCO</name>
<dbReference type="EMBL" id="AJ252289">
    <property type="protein sequence ID" value="CAC81027.1"/>
    <property type="molecule type" value="Genomic_DNA"/>
</dbReference>
<dbReference type="SMR" id="P59147"/>
<dbReference type="GO" id="GO:0009507">
    <property type="term" value="C:chloroplast"/>
    <property type="evidence" value="ECO:0007669"/>
    <property type="project" value="UniProtKB-SubCell"/>
</dbReference>
<dbReference type="GO" id="GO:0015935">
    <property type="term" value="C:small ribosomal subunit"/>
    <property type="evidence" value="ECO:0007669"/>
    <property type="project" value="InterPro"/>
</dbReference>
<dbReference type="GO" id="GO:0019843">
    <property type="term" value="F:rRNA binding"/>
    <property type="evidence" value="ECO:0007669"/>
    <property type="project" value="UniProtKB-UniRule"/>
</dbReference>
<dbReference type="GO" id="GO:0003735">
    <property type="term" value="F:structural constituent of ribosome"/>
    <property type="evidence" value="ECO:0007669"/>
    <property type="project" value="InterPro"/>
</dbReference>
<dbReference type="GO" id="GO:0042274">
    <property type="term" value="P:ribosomal small subunit biogenesis"/>
    <property type="evidence" value="ECO:0007669"/>
    <property type="project" value="TreeGrafter"/>
</dbReference>
<dbReference type="GO" id="GO:0006412">
    <property type="term" value="P:translation"/>
    <property type="evidence" value="ECO:0007669"/>
    <property type="project" value="UniProtKB-UniRule"/>
</dbReference>
<dbReference type="CDD" id="cd00165">
    <property type="entry name" value="S4"/>
    <property type="match status" value="1"/>
</dbReference>
<dbReference type="FunFam" id="1.10.1050.10:FF:000002">
    <property type="entry name" value="30S ribosomal protein S4, chloroplastic"/>
    <property type="match status" value="1"/>
</dbReference>
<dbReference type="FunFam" id="3.10.290.10:FF:000081">
    <property type="entry name" value="30S ribosomal protein S4, chloroplastic"/>
    <property type="match status" value="1"/>
</dbReference>
<dbReference type="Gene3D" id="1.10.1050.10">
    <property type="entry name" value="Ribosomal Protein S4 Delta 41, Chain A, domain 1"/>
    <property type="match status" value="1"/>
</dbReference>
<dbReference type="Gene3D" id="3.10.290.10">
    <property type="entry name" value="RNA-binding S4 domain"/>
    <property type="match status" value="1"/>
</dbReference>
<dbReference type="HAMAP" id="MF_01306_B">
    <property type="entry name" value="Ribosomal_uS4_B"/>
    <property type="match status" value="1"/>
</dbReference>
<dbReference type="InterPro" id="IPR022801">
    <property type="entry name" value="Ribosomal_uS4"/>
</dbReference>
<dbReference type="InterPro" id="IPR005709">
    <property type="entry name" value="Ribosomal_uS4_bac-type"/>
</dbReference>
<dbReference type="InterPro" id="IPR018079">
    <property type="entry name" value="Ribosomal_uS4_CS"/>
</dbReference>
<dbReference type="InterPro" id="IPR001912">
    <property type="entry name" value="Ribosomal_uS4_N"/>
</dbReference>
<dbReference type="InterPro" id="IPR002942">
    <property type="entry name" value="S4_RNA-bd"/>
</dbReference>
<dbReference type="InterPro" id="IPR036986">
    <property type="entry name" value="S4_RNA-bd_sf"/>
</dbReference>
<dbReference type="NCBIfam" id="NF003717">
    <property type="entry name" value="PRK05327.1"/>
    <property type="match status" value="1"/>
</dbReference>
<dbReference type="NCBIfam" id="TIGR01017">
    <property type="entry name" value="rpsD_bact"/>
    <property type="match status" value="1"/>
</dbReference>
<dbReference type="PANTHER" id="PTHR11831">
    <property type="entry name" value="30S 40S RIBOSOMAL PROTEIN"/>
    <property type="match status" value="1"/>
</dbReference>
<dbReference type="PANTHER" id="PTHR11831:SF4">
    <property type="entry name" value="SMALL RIBOSOMAL SUBUNIT PROTEIN US4M"/>
    <property type="match status" value="1"/>
</dbReference>
<dbReference type="Pfam" id="PF00163">
    <property type="entry name" value="Ribosomal_S4"/>
    <property type="match status" value="1"/>
</dbReference>
<dbReference type="Pfam" id="PF01479">
    <property type="entry name" value="S4"/>
    <property type="match status" value="1"/>
</dbReference>
<dbReference type="SMART" id="SM01390">
    <property type="entry name" value="Ribosomal_S4"/>
    <property type="match status" value="1"/>
</dbReference>
<dbReference type="SMART" id="SM00363">
    <property type="entry name" value="S4"/>
    <property type="match status" value="1"/>
</dbReference>
<dbReference type="SUPFAM" id="SSF55174">
    <property type="entry name" value="Alpha-L RNA-binding motif"/>
    <property type="match status" value="1"/>
</dbReference>
<dbReference type="PROSITE" id="PS00632">
    <property type="entry name" value="RIBOSOMAL_S4"/>
    <property type="match status" value="1"/>
</dbReference>
<dbReference type="PROSITE" id="PS50889">
    <property type="entry name" value="S4"/>
    <property type="match status" value="1"/>
</dbReference>
<keyword id="KW-0150">Chloroplast</keyword>
<keyword id="KW-0934">Plastid</keyword>
<keyword id="KW-0687">Ribonucleoprotein</keyword>
<keyword id="KW-0689">Ribosomal protein</keyword>
<keyword id="KW-0694">RNA-binding</keyword>
<keyword id="KW-0699">rRNA-binding</keyword>
<protein>
    <recommendedName>
        <fullName evidence="2">Small ribosomal subunit protein uS4c</fullName>
    </recommendedName>
    <alternativeName>
        <fullName>30S ribosomal protein S4, chloroplastic</fullName>
    </alternativeName>
</protein>
<sequence length="203" mass="23594">MSRYRGPRVRIIRRLGTLPGLTNRSAPQLKPSSINQSTSNKKISQYRIRLEEKQKLRFHYGITERQLLNYVRIARKAKGSTGEILLQLLEMRLDNIIFRLGMTPTIPGARQLVNHRHILVNGYIVDIPSYRCKPQDFITIKNKQKSESIISKNIEFYQKSKIANHLTYSSLEKKGLVNQILDRESIGLKINELLVVEYYSRQA</sequence>
<organism>
    <name type="scientific">Lopidium concinnum</name>
    <name type="common">Moss</name>
    <name type="synonym">Leskea concinna</name>
    <dbReference type="NCBI Taxonomy" id="69843"/>
    <lineage>
        <taxon>Eukaryota</taxon>
        <taxon>Viridiplantae</taxon>
        <taxon>Streptophyta</taxon>
        <taxon>Embryophyta</taxon>
        <taxon>Bryophyta</taxon>
        <taxon>Bryophytina</taxon>
        <taxon>Bryopsida</taxon>
        <taxon>Bryidae</taxon>
        <taxon>Hypnanae</taxon>
        <taxon>Hookeriales</taxon>
        <taxon>Hypopterygiaceae</taxon>
        <taxon>Lopidium</taxon>
    </lineage>
</organism>